<protein>
    <recommendedName>
        <fullName evidence="1">Serine--tRNA ligase</fullName>
        <ecNumber evidence="1">6.1.1.11</ecNumber>
    </recommendedName>
    <alternativeName>
        <fullName evidence="1">Seryl-tRNA synthetase</fullName>
        <shortName evidence="1">SerRS</shortName>
    </alternativeName>
    <alternativeName>
        <fullName evidence="1">Seryl-tRNA(Ser/Sec) synthetase</fullName>
    </alternativeName>
</protein>
<name>SYS_NEIG1</name>
<organism>
    <name type="scientific">Neisseria gonorrhoeae (strain ATCC 700825 / FA 1090)</name>
    <dbReference type="NCBI Taxonomy" id="242231"/>
    <lineage>
        <taxon>Bacteria</taxon>
        <taxon>Pseudomonadati</taxon>
        <taxon>Pseudomonadota</taxon>
        <taxon>Betaproteobacteria</taxon>
        <taxon>Neisseriales</taxon>
        <taxon>Neisseriaceae</taxon>
        <taxon>Neisseria</taxon>
    </lineage>
</organism>
<feature type="chain" id="PRO_0000122088" description="Serine--tRNA ligase">
    <location>
        <begin position="1"/>
        <end position="431"/>
    </location>
</feature>
<feature type="binding site" evidence="1">
    <location>
        <begin position="237"/>
        <end position="239"/>
    </location>
    <ligand>
        <name>L-serine</name>
        <dbReference type="ChEBI" id="CHEBI:33384"/>
    </ligand>
</feature>
<feature type="binding site" evidence="1">
    <location>
        <begin position="268"/>
        <end position="270"/>
    </location>
    <ligand>
        <name>ATP</name>
        <dbReference type="ChEBI" id="CHEBI:30616"/>
    </ligand>
</feature>
<feature type="binding site" evidence="1">
    <location>
        <position position="291"/>
    </location>
    <ligand>
        <name>L-serine</name>
        <dbReference type="ChEBI" id="CHEBI:33384"/>
    </ligand>
</feature>
<feature type="binding site" evidence="1">
    <location>
        <begin position="355"/>
        <end position="358"/>
    </location>
    <ligand>
        <name>ATP</name>
        <dbReference type="ChEBI" id="CHEBI:30616"/>
    </ligand>
</feature>
<feature type="binding site" evidence="1">
    <location>
        <position position="390"/>
    </location>
    <ligand>
        <name>L-serine</name>
        <dbReference type="ChEBI" id="CHEBI:33384"/>
    </ligand>
</feature>
<comment type="function">
    <text evidence="1">Catalyzes the attachment of serine to tRNA(Ser). Is also able to aminoacylate tRNA(Sec) with serine, to form the misacylated tRNA L-seryl-tRNA(Sec), which will be further converted into selenocysteinyl-tRNA(Sec).</text>
</comment>
<comment type="catalytic activity">
    <reaction evidence="1">
        <text>tRNA(Ser) + L-serine + ATP = L-seryl-tRNA(Ser) + AMP + diphosphate + H(+)</text>
        <dbReference type="Rhea" id="RHEA:12292"/>
        <dbReference type="Rhea" id="RHEA-COMP:9669"/>
        <dbReference type="Rhea" id="RHEA-COMP:9703"/>
        <dbReference type="ChEBI" id="CHEBI:15378"/>
        <dbReference type="ChEBI" id="CHEBI:30616"/>
        <dbReference type="ChEBI" id="CHEBI:33019"/>
        <dbReference type="ChEBI" id="CHEBI:33384"/>
        <dbReference type="ChEBI" id="CHEBI:78442"/>
        <dbReference type="ChEBI" id="CHEBI:78533"/>
        <dbReference type="ChEBI" id="CHEBI:456215"/>
        <dbReference type="EC" id="6.1.1.11"/>
    </reaction>
</comment>
<comment type="catalytic activity">
    <reaction evidence="1">
        <text>tRNA(Sec) + L-serine + ATP = L-seryl-tRNA(Sec) + AMP + diphosphate + H(+)</text>
        <dbReference type="Rhea" id="RHEA:42580"/>
        <dbReference type="Rhea" id="RHEA-COMP:9742"/>
        <dbReference type="Rhea" id="RHEA-COMP:10128"/>
        <dbReference type="ChEBI" id="CHEBI:15378"/>
        <dbReference type="ChEBI" id="CHEBI:30616"/>
        <dbReference type="ChEBI" id="CHEBI:33019"/>
        <dbReference type="ChEBI" id="CHEBI:33384"/>
        <dbReference type="ChEBI" id="CHEBI:78442"/>
        <dbReference type="ChEBI" id="CHEBI:78533"/>
        <dbReference type="ChEBI" id="CHEBI:456215"/>
        <dbReference type="EC" id="6.1.1.11"/>
    </reaction>
</comment>
<comment type="pathway">
    <text evidence="1">Aminoacyl-tRNA biosynthesis; selenocysteinyl-tRNA(Sec) biosynthesis; L-seryl-tRNA(Sec) from L-serine and tRNA(Sec): step 1/1.</text>
</comment>
<comment type="subunit">
    <text evidence="1">Homodimer. The tRNA molecule binds across the dimer.</text>
</comment>
<comment type="subcellular location">
    <subcellularLocation>
        <location evidence="1">Cytoplasm</location>
    </subcellularLocation>
</comment>
<comment type="domain">
    <text evidence="1">Consists of two distinct domains, a catalytic core and a N-terminal extension that is involved in tRNA binding.</text>
</comment>
<comment type="similarity">
    <text evidence="1">Belongs to the class-II aminoacyl-tRNA synthetase family. Type-1 seryl-tRNA synthetase subfamily.</text>
</comment>
<sequence>MLDIQLLRSNTAAVAERLARRGYDFDTARFDALEERRKSVQVKTEELQASRNSISKQIGALKGQGKHEEAQAAMDQVAQIKTDLEQAAADLDAVQKELDAWLLSIPNLPHESVPPGKDETENVEVRKVGTPREFDFEIKDHVDLGEPLGLDFEGGAKLSGARFTVMRGQIARLHRALAQFMLDTHMLQHGYTEHYTPYIVDDTTLQGTGQLPKFAEDLFHVTRGGDETKTTQYLIPTAEVTLTNTVAGSIIPSEQLPLKLTAHSPCFRSEAGSYGKDTRGLIRQHQFDKVEMVQIVHPEKSYGALEEMVGHAENILKALELPYRVITLCTGDMGFSAAKTYDLEVWVPAQNTYREISSCSNCEDFQARRMKARFKDENGKNRLVHTLNGSGLAVGRTLVAVLENHQNADGSINIPAALQPYMGGVTKLEVK</sequence>
<reference key="1">
    <citation type="submission" date="2003-03" db="EMBL/GenBank/DDBJ databases">
        <title>The complete genome sequence of Neisseria gonorrhoeae.</title>
        <authorList>
            <person name="Lewis L.A."/>
            <person name="Gillaspy A.F."/>
            <person name="McLaughlin R.E."/>
            <person name="Gipson M."/>
            <person name="Ducey T.F."/>
            <person name="Ownbey T."/>
            <person name="Hartman K."/>
            <person name="Nydick C."/>
            <person name="Carson M.B."/>
            <person name="Vaughn J."/>
            <person name="Thomson C."/>
            <person name="Song L."/>
            <person name="Lin S."/>
            <person name="Yuan X."/>
            <person name="Najar F."/>
            <person name="Zhan M."/>
            <person name="Ren Q."/>
            <person name="Zhu H."/>
            <person name="Qi S."/>
            <person name="Kenton S.M."/>
            <person name="Lai H."/>
            <person name="White J.D."/>
            <person name="Clifton S."/>
            <person name="Roe B.A."/>
            <person name="Dyer D.W."/>
        </authorList>
    </citation>
    <scope>NUCLEOTIDE SEQUENCE [LARGE SCALE GENOMIC DNA]</scope>
    <source>
        <strain>ATCC 700825 / FA 1090</strain>
    </source>
</reference>
<evidence type="ECO:0000255" key="1">
    <source>
        <dbReference type="HAMAP-Rule" id="MF_00176"/>
    </source>
</evidence>
<keyword id="KW-0030">Aminoacyl-tRNA synthetase</keyword>
<keyword id="KW-0067">ATP-binding</keyword>
<keyword id="KW-0963">Cytoplasm</keyword>
<keyword id="KW-0436">Ligase</keyword>
<keyword id="KW-0547">Nucleotide-binding</keyword>
<keyword id="KW-0648">Protein biosynthesis</keyword>
<keyword id="KW-1185">Reference proteome</keyword>
<accession>Q5F752</accession>
<proteinExistence type="inferred from homology"/>
<dbReference type="EC" id="6.1.1.11" evidence="1"/>
<dbReference type="EMBL" id="AE004969">
    <property type="protein sequence ID" value="AAW89985.1"/>
    <property type="molecule type" value="Genomic_DNA"/>
</dbReference>
<dbReference type="RefSeq" id="WP_003700216.1">
    <property type="nucleotide sequence ID" value="NC_002946.2"/>
</dbReference>
<dbReference type="RefSeq" id="YP_208397.1">
    <property type="nucleotide sequence ID" value="NC_002946.2"/>
</dbReference>
<dbReference type="SMR" id="Q5F752"/>
<dbReference type="STRING" id="242231.NGO_1335"/>
<dbReference type="KEGG" id="ngo:NGO_1335"/>
<dbReference type="PATRIC" id="fig|242231.10.peg.1569"/>
<dbReference type="HOGENOM" id="CLU_023797_1_1_4"/>
<dbReference type="UniPathway" id="UPA00906">
    <property type="reaction ID" value="UER00895"/>
</dbReference>
<dbReference type="Proteomes" id="UP000000535">
    <property type="component" value="Chromosome"/>
</dbReference>
<dbReference type="GO" id="GO:0005737">
    <property type="term" value="C:cytoplasm"/>
    <property type="evidence" value="ECO:0007669"/>
    <property type="project" value="UniProtKB-SubCell"/>
</dbReference>
<dbReference type="GO" id="GO:0005524">
    <property type="term" value="F:ATP binding"/>
    <property type="evidence" value="ECO:0007669"/>
    <property type="project" value="UniProtKB-UniRule"/>
</dbReference>
<dbReference type="GO" id="GO:0004828">
    <property type="term" value="F:serine-tRNA ligase activity"/>
    <property type="evidence" value="ECO:0007669"/>
    <property type="project" value="UniProtKB-UniRule"/>
</dbReference>
<dbReference type="GO" id="GO:0016260">
    <property type="term" value="P:selenocysteine biosynthetic process"/>
    <property type="evidence" value="ECO:0007669"/>
    <property type="project" value="UniProtKB-UniRule"/>
</dbReference>
<dbReference type="GO" id="GO:0006434">
    <property type="term" value="P:seryl-tRNA aminoacylation"/>
    <property type="evidence" value="ECO:0007669"/>
    <property type="project" value="UniProtKB-UniRule"/>
</dbReference>
<dbReference type="CDD" id="cd00770">
    <property type="entry name" value="SerRS_core"/>
    <property type="match status" value="1"/>
</dbReference>
<dbReference type="Gene3D" id="3.30.930.10">
    <property type="entry name" value="Bira Bifunctional Protein, Domain 2"/>
    <property type="match status" value="1"/>
</dbReference>
<dbReference type="Gene3D" id="1.10.287.40">
    <property type="entry name" value="Serine-tRNA synthetase, tRNA binding domain"/>
    <property type="match status" value="1"/>
</dbReference>
<dbReference type="HAMAP" id="MF_00176">
    <property type="entry name" value="Ser_tRNA_synth_type1"/>
    <property type="match status" value="1"/>
</dbReference>
<dbReference type="InterPro" id="IPR002314">
    <property type="entry name" value="aa-tRNA-synt_IIb"/>
</dbReference>
<dbReference type="InterPro" id="IPR006195">
    <property type="entry name" value="aa-tRNA-synth_II"/>
</dbReference>
<dbReference type="InterPro" id="IPR045864">
    <property type="entry name" value="aa-tRNA-synth_II/BPL/LPL"/>
</dbReference>
<dbReference type="InterPro" id="IPR002317">
    <property type="entry name" value="Ser-tRNA-ligase_type_1"/>
</dbReference>
<dbReference type="InterPro" id="IPR015866">
    <property type="entry name" value="Ser-tRNA-synth_1_N"/>
</dbReference>
<dbReference type="InterPro" id="IPR042103">
    <property type="entry name" value="SerRS_1_N_sf"/>
</dbReference>
<dbReference type="InterPro" id="IPR033729">
    <property type="entry name" value="SerRS_core"/>
</dbReference>
<dbReference type="InterPro" id="IPR010978">
    <property type="entry name" value="tRNA-bd_arm"/>
</dbReference>
<dbReference type="NCBIfam" id="TIGR00414">
    <property type="entry name" value="serS"/>
    <property type="match status" value="1"/>
</dbReference>
<dbReference type="PANTHER" id="PTHR43697:SF1">
    <property type="entry name" value="SERINE--TRNA LIGASE"/>
    <property type="match status" value="1"/>
</dbReference>
<dbReference type="PANTHER" id="PTHR43697">
    <property type="entry name" value="SERYL-TRNA SYNTHETASE"/>
    <property type="match status" value="1"/>
</dbReference>
<dbReference type="Pfam" id="PF02403">
    <property type="entry name" value="Seryl_tRNA_N"/>
    <property type="match status" value="1"/>
</dbReference>
<dbReference type="Pfam" id="PF00587">
    <property type="entry name" value="tRNA-synt_2b"/>
    <property type="match status" value="1"/>
</dbReference>
<dbReference type="PIRSF" id="PIRSF001529">
    <property type="entry name" value="Ser-tRNA-synth_IIa"/>
    <property type="match status" value="1"/>
</dbReference>
<dbReference type="PRINTS" id="PR00981">
    <property type="entry name" value="TRNASYNTHSER"/>
</dbReference>
<dbReference type="SUPFAM" id="SSF55681">
    <property type="entry name" value="Class II aaRS and biotin synthetases"/>
    <property type="match status" value="1"/>
</dbReference>
<dbReference type="SUPFAM" id="SSF46589">
    <property type="entry name" value="tRNA-binding arm"/>
    <property type="match status" value="1"/>
</dbReference>
<dbReference type="PROSITE" id="PS50862">
    <property type="entry name" value="AA_TRNA_LIGASE_II"/>
    <property type="match status" value="1"/>
</dbReference>
<gene>
    <name evidence="1" type="primary">serS</name>
    <name type="ordered locus">NGO_1335</name>
</gene>